<reference key="1">
    <citation type="journal article" date="2006" name="J. Bacteriol.">
        <title>Whole-genome sequence of Listeria welshimeri reveals common steps in genome reduction with Listeria innocua as compared to Listeria monocytogenes.</title>
        <authorList>
            <person name="Hain T."/>
            <person name="Steinweg C."/>
            <person name="Kuenne C.T."/>
            <person name="Billion A."/>
            <person name="Ghai R."/>
            <person name="Chatterjee S.S."/>
            <person name="Domann E."/>
            <person name="Kaerst U."/>
            <person name="Goesmann A."/>
            <person name="Bekel T."/>
            <person name="Bartels D."/>
            <person name="Kaiser O."/>
            <person name="Meyer F."/>
            <person name="Puehler A."/>
            <person name="Weisshaar B."/>
            <person name="Wehland J."/>
            <person name="Liang C."/>
            <person name="Dandekar T."/>
            <person name="Lampidis R."/>
            <person name="Kreft J."/>
            <person name="Goebel W."/>
            <person name="Chakraborty T."/>
        </authorList>
    </citation>
    <scope>NUCLEOTIDE SEQUENCE [LARGE SCALE GENOMIC DNA]</scope>
    <source>
        <strain>ATCC 35897 / DSM 20650 / CCUG 15529 / CIP 8149 / NCTC 11857 / SLCC 5334 / V8</strain>
    </source>
</reference>
<sequence>MPRKGPVAKRDVLPDPIYNSKLVTRLINKMMVDGKRGKSQAILYSAFDIIAQETGKDPMEVFEQAMKNIMPLLEVKARRVGGANYQVPIEVRADRRSTLGLRWLVNYARLRGEKTMEVRVAREIMDAANNTGASVKKREDTHKMADANRAFAHYRW</sequence>
<proteinExistence type="inferred from homology"/>
<gene>
    <name evidence="1" type="primary">rpsG</name>
    <name type="ordered locus">lwe2604</name>
</gene>
<accession>A0ALZ0</accession>
<comment type="function">
    <text evidence="1">One of the primary rRNA binding proteins, it binds directly to 16S rRNA where it nucleates assembly of the head domain of the 30S subunit. Is located at the subunit interface close to the decoding center, probably blocks exit of the E-site tRNA.</text>
</comment>
<comment type="subunit">
    <text evidence="1">Part of the 30S ribosomal subunit. Contacts proteins S9 and S11.</text>
</comment>
<comment type="similarity">
    <text evidence="1">Belongs to the universal ribosomal protein uS7 family.</text>
</comment>
<organism>
    <name type="scientific">Listeria welshimeri serovar 6b (strain ATCC 35897 / DSM 20650 / CCUG 15529 / CIP 8149 / NCTC 11857 / SLCC 5334 / V8)</name>
    <dbReference type="NCBI Taxonomy" id="386043"/>
    <lineage>
        <taxon>Bacteria</taxon>
        <taxon>Bacillati</taxon>
        <taxon>Bacillota</taxon>
        <taxon>Bacilli</taxon>
        <taxon>Bacillales</taxon>
        <taxon>Listeriaceae</taxon>
        <taxon>Listeria</taxon>
    </lineage>
</organism>
<keyword id="KW-0687">Ribonucleoprotein</keyword>
<keyword id="KW-0689">Ribosomal protein</keyword>
<keyword id="KW-0694">RNA-binding</keyword>
<keyword id="KW-0699">rRNA-binding</keyword>
<keyword id="KW-0820">tRNA-binding</keyword>
<evidence type="ECO:0000255" key="1">
    <source>
        <dbReference type="HAMAP-Rule" id="MF_00480"/>
    </source>
</evidence>
<evidence type="ECO:0000305" key="2"/>
<feature type="chain" id="PRO_1000014221" description="Small ribosomal subunit protein uS7">
    <location>
        <begin position="1"/>
        <end position="156"/>
    </location>
</feature>
<protein>
    <recommendedName>
        <fullName evidence="1">Small ribosomal subunit protein uS7</fullName>
    </recommendedName>
    <alternativeName>
        <fullName evidence="2">30S ribosomal protein S7</fullName>
    </alternativeName>
</protein>
<name>RS7_LISW6</name>
<dbReference type="EMBL" id="AM263198">
    <property type="protein sequence ID" value="CAK22022.1"/>
    <property type="molecule type" value="Genomic_DNA"/>
</dbReference>
<dbReference type="RefSeq" id="WP_003722012.1">
    <property type="nucleotide sequence ID" value="NC_008555.1"/>
</dbReference>
<dbReference type="SMR" id="A0ALZ0"/>
<dbReference type="STRING" id="386043.lwe2604"/>
<dbReference type="GeneID" id="93236077"/>
<dbReference type="KEGG" id="lwe:lwe2604"/>
<dbReference type="eggNOG" id="COG0049">
    <property type="taxonomic scope" value="Bacteria"/>
</dbReference>
<dbReference type="HOGENOM" id="CLU_072226_1_1_9"/>
<dbReference type="OrthoDB" id="9807653at2"/>
<dbReference type="Proteomes" id="UP000000779">
    <property type="component" value="Chromosome"/>
</dbReference>
<dbReference type="GO" id="GO:0015935">
    <property type="term" value="C:small ribosomal subunit"/>
    <property type="evidence" value="ECO:0007669"/>
    <property type="project" value="InterPro"/>
</dbReference>
<dbReference type="GO" id="GO:0019843">
    <property type="term" value="F:rRNA binding"/>
    <property type="evidence" value="ECO:0007669"/>
    <property type="project" value="UniProtKB-UniRule"/>
</dbReference>
<dbReference type="GO" id="GO:0003735">
    <property type="term" value="F:structural constituent of ribosome"/>
    <property type="evidence" value="ECO:0007669"/>
    <property type="project" value="InterPro"/>
</dbReference>
<dbReference type="GO" id="GO:0000049">
    <property type="term" value="F:tRNA binding"/>
    <property type="evidence" value="ECO:0007669"/>
    <property type="project" value="UniProtKB-UniRule"/>
</dbReference>
<dbReference type="GO" id="GO:0006412">
    <property type="term" value="P:translation"/>
    <property type="evidence" value="ECO:0007669"/>
    <property type="project" value="UniProtKB-UniRule"/>
</dbReference>
<dbReference type="CDD" id="cd14869">
    <property type="entry name" value="uS7_Bacteria"/>
    <property type="match status" value="1"/>
</dbReference>
<dbReference type="FunFam" id="1.10.455.10:FF:000001">
    <property type="entry name" value="30S ribosomal protein S7"/>
    <property type="match status" value="1"/>
</dbReference>
<dbReference type="Gene3D" id="1.10.455.10">
    <property type="entry name" value="Ribosomal protein S7 domain"/>
    <property type="match status" value="1"/>
</dbReference>
<dbReference type="HAMAP" id="MF_00480_B">
    <property type="entry name" value="Ribosomal_uS7_B"/>
    <property type="match status" value="1"/>
</dbReference>
<dbReference type="InterPro" id="IPR000235">
    <property type="entry name" value="Ribosomal_uS7"/>
</dbReference>
<dbReference type="InterPro" id="IPR005717">
    <property type="entry name" value="Ribosomal_uS7_bac/org-type"/>
</dbReference>
<dbReference type="InterPro" id="IPR020606">
    <property type="entry name" value="Ribosomal_uS7_CS"/>
</dbReference>
<dbReference type="InterPro" id="IPR023798">
    <property type="entry name" value="Ribosomal_uS7_dom"/>
</dbReference>
<dbReference type="InterPro" id="IPR036823">
    <property type="entry name" value="Ribosomal_uS7_dom_sf"/>
</dbReference>
<dbReference type="NCBIfam" id="TIGR01029">
    <property type="entry name" value="rpsG_bact"/>
    <property type="match status" value="1"/>
</dbReference>
<dbReference type="PANTHER" id="PTHR11205">
    <property type="entry name" value="RIBOSOMAL PROTEIN S7"/>
    <property type="match status" value="1"/>
</dbReference>
<dbReference type="Pfam" id="PF00177">
    <property type="entry name" value="Ribosomal_S7"/>
    <property type="match status" value="1"/>
</dbReference>
<dbReference type="PIRSF" id="PIRSF002122">
    <property type="entry name" value="RPS7p_RPS7a_RPS5e_RPS7o"/>
    <property type="match status" value="1"/>
</dbReference>
<dbReference type="SUPFAM" id="SSF47973">
    <property type="entry name" value="Ribosomal protein S7"/>
    <property type="match status" value="1"/>
</dbReference>
<dbReference type="PROSITE" id="PS00052">
    <property type="entry name" value="RIBOSOMAL_S7"/>
    <property type="match status" value="1"/>
</dbReference>